<reference key="1">
    <citation type="journal article" date="2000" name="Nature">
        <title>The genome sequence of the plant pathogen Xylella fastidiosa.</title>
        <authorList>
            <person name="Simpson A.J.G."/>
            <person name="Reinach F.C."/>
            <person name="Arruda P."/>
            <person name="Abreu F.A."/>
            <person name="Acencio M."/>
            <person name="Alvarenga R."/>
            <person name="Alves L.M.C."/>
            <person name="Araya J.E."/>
            <person name="Baia G.S."/>
            <person name="Baptista C.S."/>
            <person name="Barros M.H."/>
            <person name="Bonaccorsi E.D."/>
            <person name="Bordin S."/>
            <person name="Bove J.M."/>
            <person name="Briones M.R.S."/>
            <person name="Bueno M.R.P."/>
            <person name="Camargo A.A."/>
            <person name="Camargo L.E.A."/>
            <person name="Carraro D.M."/>
            <person name="Carrer H."/>
            <person name="Colauto N.B."/>
            <person name="Colombo C."/>
            <person name="Costa F.F."/>
            <person name="Costa M.C.R."/>
            <person name="Costa-Neto C.M."/>
            <person name="Coutinho L.L."/>
            <person name="Cristofani M."/>
            <person name="Dias-Neto E."/>
            <person name="Docena C."/>
            <person name="El-Dorry H."/>
            <person name="Facincani A.P."/>
            <person name="Ferreira A.J.S."/>
            <person name="Ferreira V.C.A."/>
            <person name="Ferro J.A."/>
            <person name="Fraga J.S."/>
            <person name="Franca S.C."/>
            <person name="Franco M.C."/>
            <person name="Frohme M."/>
            <person name="Furlan L.R."/>
            <person name="Garnier M."/>
            <person name="Goldman G.H."/>
            <person name="Goldman M.H.S."/>
            <person name="Gomes S.L."/>
            <person name="Gruber A."/>
            <person name="Ho P.L."/>
            <person name="Hoheisel J.D."/>
            <person name="Junqueira M.L."/>
            <person name="Kemper E.L."/>
            <person name="Kitajima J.P."/>
            <person name="Krieger J.E."/>
            <person name="Kuramae E.E."/>
            <person name="Laigret F."/>
            <person name="Lambais M.R."/>
            <person name="Leite L.C.C."/>
            <person name="Lemos E.G.M."/>
            <person name="Lemos M.V.F."/>
            <person name="Lopes S.A."/>
            <person name="Lopes C.R."/>
            <person name="Machado J.A."/>
            <person name="Machado M.A."/>
            <person name="Madeira A.M.B.N."/>
            <person name="Madeira H.M.F."/>
            <person name="Marino C.L."/>
            <person name="Marques M.V."/>
            <person name="Martins E.A.L."/>
            <person name="Martins E.M.F."/>
            <person name="Matsukuma A.Y."/>
            <person name="Menck C.F.M."/>
            <person name="Miracca E.C."/>
            <person name="Miyaki C.Y."/>
            <person name="Monteiro-Vitorello C.B."/>
            <person name="Moon D.H."/>
            <person name="Nagai M.A."/>
            <person name="Nascimento A.L.T.O."/>
            <person name="Netto L.E.S."/>
            <person name="Nhani A. Jr."/>
            <person name="Nobrega F.G."/>
            <person name="Nunes L.R."/>
            <person name="Oliveira M.A."/>
            <person name="de Oliveira M.C."/>
            <person name="de Oliveira R.C."/>
            <person name="Palmieri D.A."/>
            <person name="Paris A."/>
            <person name="Peixoto B.R."/>
            <person name="Pereira G.A.G."/>
            <person name="Pereira H.A. Jr."/>
            <person name="Pesquero J.B."/>
            <person name="Quaggio R.B."/>
            <person name="Roberto P.G."/>
            <person name="Rodrigues V."/>
            <person name="de Rosa A.J.M."/>
            <person name="de Rosa V.E. Jr."/>
            <person name="de Sa R.G."/>
            <person name="Santelli R.V."/>
            <person name="Sawasaki H.E."/>
            <person name="da Silva A.C.R."/>
            <person name="da Silva A.M."/>
            <person name="da Silva F.R."/>
            <person name="Silva W.A. Jr."/>
            <person name="da Silveira J.F."/>
            <person name="Silvestri M.L.Z."/>
            <person name="Siqueira W.J."/>
            <person name="de Souza A.A."/>
            <person name="de Souza A.P."/>
            <person name="Terenzi M.F."/>
            <person name="Truffi D."/>
            <person name="Tsai S.M."/>
            <person name="Tsuhako M.H."/>
            <person name="Vallada H."/>
            <person name="Van Sluys M.A."/>
            <person name="Verjovski-Almeida S."/>
            <person name="Vettore A.L."/>
            <person name="Zago M.A."/>
            <person name="Zatz M."/>
            <person name="Meidanis J."/>
            <person name="Setubal J.C."/>
        </authorList>
    </citation>
    <scope>NUCLEOTIDE SEQUENCE [LARGE SCALE GENOMIC DNA]</scope>
    <source>
        <strain>9a5c</strain>
    </source>
</reference>
<evidence type="ECO:0000255" key="1">
    <source>
        <dbReference type="HAMAP-Rule" id="MF_00693"/>
    </source>
</evidence>
<accession>Q9PC75</accession>
<feature type="chain" id="PRO_0000175937" description="Probable transcriptional regulatory protein XF_1906">
    <location>
        <begin position="1"/>
        <end position="244"/>
    </location>
</feature>
<organism>
    <name type="scientific">Xylella fastidiosa (strain 9a5c)</name>
    <dbReference type="NCBI Taxonomy" id="160492"/>
    <lineage>
        <taxon>Bacteria</taxon>
        <taxon>Pseudomonadati</taxon>
        <taxon>Pseudomonadota</taxon>
        <taxon>Gammaproteobacteria</taxon>
        <taxon>Lysobacterales</taxon>
        <taxon>Lysobacteraceae</taxon>
        <taxon>Xylella</taxon>
    </lineage>
</organism>
<protein>
    <recommendedName>
        <fullName evidence="1">Probable transcriptional regulatory protein XF_1906</fullName>
    </recommendedName>
</protein>
<name>Y1906_XYLFA</name>
<keyword id="KW-0963">Cytoplasm</keyword>
<keyword id="KW-0238">DNA-binding</keyword>
<keyword id="KW-0804">Transcription</keyword>
<keyword id="KW-0805">Transcription regulation</keyword>
<sequence>MGRGPSIEARKNASDSKRGKIFTKIIRQIGVAARAGGGDPSNNPSLRVVIDKALASNMSKDVIERAIKKAIGEMEGVQYEEVRYEGYAPGGVAVIVDCLTDNRLRTVSDVRHAFSKCGGNMGTEGSVAFMFKRLGVLSYAHAIADEERITEAAIDAGAEDVMVYTEDDEIEVITTPEAFSRVKEEMAALGLMPYHAQITFRADSDIVVDGDTAIQVRKLLDILEDLDDVQDVYSNVDQVTLGKR</sequence>
<proteinExistence type="inferred from homology"/>
<dbReference type="EMBL" id="AE003849">
    <property type="protein sequence ID" value="AAF84712.1"/>
    <property type="molecule type" value="Genomic_DNA"/>
</dbReference>
<dbReference type="PIR" id="A82624">
    <property type="entry name" value="A82624"/>
</dbReference>
<dbReference type="RefSeq" id="WP_010894372.1">
    <property type="nucleotide sequence ID" value="NC_002488.3"/>
</dbReference>
<dbReference type="SMR" id="Q9PC75"/>
<dbReference type="STRING" id="160492.XF_1906"/>
<dbReference type="KEGG" id="xfa:XF_1906"/>
<dbReference type="eggNOG" id="COG0217">
    <property type="taxonomic scope" value="Bacteria"/>
</dbReference>
<dbReference type="HOGENOM" id="CLU_062974_2_2_6"/>
<dbReference type="Proteomes" id="UP000000812">
    <property type="component" value="Chromosome"/>
</dbReference>
<dbReference type="GO" id="GO:0005829">
    <property type="term" value="C:cytosol"/>
    <property type="evidence" value="ECO:0007669"/>
    <property type="project" value="TreeGrafter"/>
</dbReference>
<dbReference type="GO" id="GO:0003677">
    <property type="term" value="F:DNA binding"/>
    <property type="evidence" value="ECO:0007669"/>
    <property type="project" value="UniProtKB-UniRule"/>
</dbReference>
<dbReference type="GO" id="GO:0006355">
    <property type="term" value="P:regulation of DNA-templated transcription"/>
    <property type="evidence" value="ECO:0007669"/>
    <property type="project" value="UniProtKB-UniRule"/>
</dbReference>
<dbReference type="FunFam" id="1.10.10.200:FF:000004">
    <property type="entry name" value="Probable transcriptional regulatory protein BSBG_02618"/>
    <property type="match status" value="1"/>
</dbReference>
<dbReference type="Gene3D" id="1.10.10.200">
    <property type="match status" value="1"/>
</dbReference>
<dbReference type="Gene3D" id="3.30.70.980">
    <property type="match status" value="2"/>
</dbReference>
<dbReference type="HAMAP" id="MF_00693">
    <property type="entry name" value="Transcrip_reg_TACO1"/>
    <property type="match status" value="1"/>
</dbReference>
<dbReference type="InterPro" id="IPR017856">
    <property type="entry name" value="Integrase-like_N"/>
</dbReference>
<dbReference type="InterPro" id="IPR048300">
    <property type="entry name" value="TACO1_YebC-like_2nd/3rd_dom"/>
</dbReference>
<dbReference type="InterPro" id="IPR049083">
    <property type="entry name" value="TACO1_YebC_N"/>
</dbReference>
<dbReference type="InterPro" id="IPR002876">
    <property type="entry name" value="Transcrip_reg_TACO1-like"/>
</dbReference>
<dbReference type="InterPro" id="IPR026564">
    <property type="entry name" value="Transcrip_reg_TACO1-like_dom3"/>
</dbReference>
<dbReference type="InterPro" id="IPR029072">
    <property type="entry name" value="YebC-like"/>
</dbReference>
<dbReference type="NCBIfam" id="NF001030">
    <property type="entry name" value="PRK00110.1"/>
    <property type="match status" value="1"/>
</dbReference>
<dbReference type="NCBIfam" id="NF009044">
    <property type="entry name" value="PRK12378.1"/>
    <property type="match status" value="1"/>
</dbReference>
<dbReference type="NCBIfam" id="TIGR01033">
    <property type="entry name" value="YebC/PmpR family DNA-binding transcriptional regulator"/>
    <property type="match status" value="1"/>
</dbReference>
<dbReference type="PANTHER" id="PTHR12532:SF6">
    <property type="entry name" value="TRANSCRIPTIONAL REGULATORY PROTEIN YEBC-RELATED"/>
    <property type="match status" value="1"/>
</dbReference>
<dbReference type="PANTHER" id="PTHR12532">
    <property type="entry name" value="TRANSLATIONAL ACTIVATOR OF CYTOCHROME C OXIDASE 1"/>
    <property type="match status" value="1"/>
</dbReference>
<dbReference type="Pfam" id="PF20772">
    <property type="entry name" value="TACO1_YebC_N"/>
    <property type="match status" value="1"/>
</dbReference>
<dbReference type="Pfam" id="PF01709">
    <property type="entry name" value="Transcrip_reg"/>
    <property type="match status" value="1"/>
</dbReference>
<dbReference type="SUPFAM" id="SSF75625">
    <property type="entry name" value="YebC-like"/>
    <property type="match status" value="1"/>
</dbReference>
<gene>
    <name type="ordered locus">XF_1906</name>
</gene>
<comment type="subcellular location">
    <subcellularLocation>
        <location evidence="1">Cytoplasm</location>
    </subcellularLocation>
</comment>
<comment type="similarity">
    <text evidence="1">Belongs to the TACO1 family.</text>
</comment>